<evidence type="ECO:0000250" key="1"/>
<evidence type="ECO:0000305" key="2"/>
<keyword id="KW-0131">Cell cycle</keyword>
<keyword id="KW-0963">Cytoplasm</keyword>
<keyword id="KW-0206">Cytoskeleton</keyword>
<keyword id="KW-0235">DNA replication</keyword>
<keyword id="KW-0539">Nucleus</keyword>
<keyword id="KW-1185">Reference proteome</keyword>
<name>SLD7_EREGS</name>
<comment type="function">
    <text evidence="1">Required for the proper initiation of DNA replication. Required for mitochondrial morphology (By similarity).</text>
</comment>
<comment type="subcellular location">
    <subcellularLocation>
        <location evidence="1">Nucleus</location>
    </subcellularLocation>
    <subcellularLocation>
        <location evidence="1">Cytoplasm</location>
        <location evidence="1">Cytoskeleton</location>
        <location evidence="1">Spindle pole</location>
    </subcellularLocation>
</comment>
<comment type="similarity">
    <text evidence="2">Belongs to the SLD7 family.</text>
</comment>
<protein>
    <recommendedName>
        <fullName>Mitochondrial morphogenesis protein SLD7</fullName>
    </recommendedName>
</protein>
<feature type="chain" id="PRO_0000411024" description="Mitochondrial morphogenesis protein SLD7">
    <location>
        <begin position="1"/>
        <end position="243"/>
    </location>
</feature>
<gene>
    <name type="primary">SLD7</name>
    <name type="ordered locus">ADR203C</name>
</gene>
<reference key="1">
    <citation type="journal article" date="2004" name="Science">
        <title>The Ashbya gossypii genome as a tool for mapping the ancient Saccharomyces cerevisiae genome.</title>
        <authorList>
            <person name="Dietrich F.S."/>
            <person name="Voegeli S."/>
            <person name="Brachat S."/>
            <person name="Lerch A."/>
            <person name="Gates K."/>
            <person name="Steiner S."/>
            <person name="Mohr C."/>
            <person name="Poehlmann R."/>
            <person name="Luedi P."/>
            <person name="Choi S."/>
            <person name="Wing R.A."/>
            <person name="Flavier A."/>
            <person name="Gaffney T.D."/>
            <person name="Philippsen P."/>
        </authorList>
    </citation>
    <scope>NUCLEOTIDE SEQUENCE [LARGE SCALE GENOMIC DNA]</scope>
    <source>
        <strain>ATCC 10895 / CBS 109.51 / FGSC 9923 / NRRL Y-1056</strain>
    </source>
</reference>
<reference key="2">
    <citation type="journal article" date="2013" name="G3 (Bethesda)">
        <title>Genomes of Ashbya fungi isolated from insects reveal four mating-type loci, numerous translocations, lack of transposons, and distinct gene duplications.</title>
        <authorList>
            <person name="Dietrich F.S."/>
            <person name="Voegeli S."/>
            <person name="Kuo S."/>
            <person name="Philippsen P."/>
        </authorList>
    </citation>
    <scope>GENOME REANNOTATION</scope>
    <source>
        <strain>ATCC 10895 / CBS 109.51 / FGSC 9923 / NRRL Y-1056</strain>
    </source>
</reference>
<sequence>MASDWDKWFELRLAVGRGVVLRDVQLWQRRGSSSSRPASHTGLTGRLLQAISLDRLPVWAGRSNSYRCFSSSTTTRAFFAAKLLRRRHRARGLVVELAPTRASKEYLIFHKELGADSHFELCCFTLDLSRKHALDAALKPVLPAARIDTLVLRSGARRRAAENRQDPANTSDARQRFVARLSQCILGGLRLRAVPQARYEKLYRAVFQASEFAFRDELAASADVPFEALQDCVETLLKLFTRS</sequence>
<organism>
    <name type="scientific">Eremothecium gossypii (strain ATCC 10895 / CBS 109.51 / FGSC 9923 / NRRL Y-1056)</name>
    <name type="common">Yeast</name>
    <name type="synonym">Ashbya gossypii</name>
    <dbReference type="NCBI Taxonomy" id="284811"/>
    <lineage>
        <taxon>Eukaryota</taxon>
        <taxon>Fungi</taxon>
        <taxon>Dikarya</taxon>
        <taxon>Ascomycota</taxon>
        <taxon>Saccharomycotina</taxon>
        <taxon>Saccharomycetes</taxon>
        <taxon>Saccharomycetales</taxon>
        <taxon>Saccharomycetaceae</taxon>
        <taxon>Eremothecium</taxon>
    </lineage>
</organism>
<proteinExistence type="inferred from homology"/>
<dbReference type="EMBL" id="AE016817">
    <property type="protein sequence ID" value="AAS52123.2"/>
    <property type="molecule type" value="Genomic_DNA"/>
</dbReference>
<dbReference type="RefSeq" id="NP_984299.2">
    <property type="nucleotide sequence ID" value="NM_209652.2"/>
</dbReference>
<dbReference type="SMR" id="Q759S0"/>
<dbReference type="FunCoup" id="Q759S0">
    <property type="interactions" value="15"/>
</dbReference>
<dbReference type="STRING" id="284811.Q759S0"/>
<dbReference type="EnsemblFungi" id="AAS52123">
    <property type="protein sequence ID" value="AAS52123"/>
    <property type="gene ID" value="AGOS_ADR203C"/>
</dbReference>
<dbReference type="GeneID" id="4620461"/>
<dbReference type="KEGG" id="ago:AGOS_ADR203C"/>
<dbReference type="eggNOG" id="ENOG502RZIJ">
    <property type="taxonomic scope" value="Eukaryota"/>
</dbReference>
<dbReference type="HOGENOM" id="CLU_072105_0_0_1"/>
<dbReference type="InParanoid" id="Q759S0"/>
<dbReference type="OMA" id="EFTHRDE"/>
<dbReference type="OrthoDB" id="4063051at2759"/>
<dbReference type="Proteomes" id="UP000000591">
    <property type="component" value="Chromosome IV"/>
</dbReference>
<dbReference type="GO" id="GO:0000775">
    <property type="term" value="C:chromosome, centromeric region"/>
    <property type="evidence" value="ECO:0007669"/>
    <property type="project" value="EnsemblFungi"/>
</dbReference>
<dbReference type="GO" id="GO:0005737">
    <property type="term" value="C:cytoplasm"/>
    <property type="evidence" value="ECO:0007669"/>
    <property type="project" value="UniProtKB-KW"/>
</dbReference>
<dbReference type="GO" id="GO:0031261">
    <property type="term" value="C:DNA replication preinitiation complex"/>
    <property type="evidence" value="ECO:0007669"/>
    <property type="project" value="EnsemblFungi"/>
</dbReference>
<dbReference type="GO" id="GO:0000922">
    <property type="term" value="C:spindle pole"/>
    <property type="evidence" value="ECO:0007669"/>
    <property type="project" value="UniProtKB-SubCell"/>
</dbReference>
<dbReference type="GO" id="GO:0006260">
    <property type="term" value="P:DNA replication"/>
    <property type="evidence" value="ECO:0007669"/>
    <property type="project" value="UniProtKB-KW"/>
</dbReference>
<dbReference type="GO" id="GO:0030174">
    <property type="term" value="P:regulation of DNA-templated DNA replication initiation"/>
    <property type="evidence" value="ECO:0007669"/>
    <property type="project" value="EnsemblFungi"/>
</dbReference>
<dbReference type="InterPro" id="IPR016808">
    <property type="entry name" value="Sld7"/>
</dbReference>
<dbReference type="InterPro" id="IPR041260">
    <property type="entry name" value="Sld7_C"/>
</dbReference>
<dbReference type="InterPro" id="IPR041564">
    <property type="entry name" value="Sld7_N"/>
</dbReference>
<dbReference type="Pfam" id="PF18596">
    <property type="entry name" value="Sld7_C"/>
    <property type="match status" value="1"/>
</dbReference>
<dbReference type="Pfam" id="PF18636">
    <property type="entry name" value="Sld7_N"/>
    <property type="match status" value="1"/>
</dbReference>
<dbReference type="PIRSF" id="PIRSF022788">
    <property type="entry name" value="UCP022788"/>
    <property type="match status" value="1"/>
</dbReference>
<accession>Q759S0</accession>